<protein>
    <recommendedName>
        <fullName>Testis-expressed protein 11</fullName>
    </recommendedName>
    <alternativeName>
        <fullName evidence="1">Protein ZIP4 homolog</fullName>
        <shortName>ZIP4H</shortName>
    </alternativeName>
</protein>
<feature type="chain" id="PRO_0000296955" description="Testis-expressed protein 11">
    <location>
        <begin position="1"/>
        <end position="940"/>
    </location>
</feature>
<feature type="splice variant" id="VSP_027260" description="In isoform 2." evidence="9">
    <location>
        <begin position="1"/>
        <end position="325"/>
    </location>
</feature>
<feature type="splice variant" id="VSP_027261" description="In isoform 3." evidence="8 9 10">
    <original>MISAHCNLRLLCSSDSSASASQVAGTT</original>
    <variation>MDNDDFFSMDFK</variation>
    <location>
        <begin position="1"/>
        <end position="27"/>
    </location>
</feature>
<feature type="sequence variant" id="VAR_034635" description="In dbSNP:rs6525433.">
    <original>K</original>
    <variation>R</variation>
    <location>
        <position position="130"/>
    </location>
</feature>
<feature type="sequence variant" id="VAR_073889" description="In SPGFX2; dbSNP:rs143246552." evidence="4 5">
    <original>M</original>
    <variation>V</variation>
    <location>
        <position position="171"/>
    </location>
</feature>
<feature type="sequence variant" id="VAR_034636" description="In dbSNP:rs4844247." evidence="2">
    <original>E</original>
    <variation>K</variation>
    <location>
        <position position="451"/>
    </location>
</feature>
<feature type="sequence variant" id="VAR_073890" description="In SPGFX2; dbSNP:rs140984555." evidence="4">
    <original>A</original>
    <variation>T</variation>
    <location>
        <position position="698"/>
    </location>
</feature>
<feature type="sequence conflict" description="In Ref. 1; BAB71520." evidence="11" ref="1">
    <original>T</original>
    <variation>A</variation>
    <location>
        <position position="65"/>
    </location>
</feature>
<feature type="sequence conflict" description="In Ref. 1; BAB71465." evidence="11" ref="1">
    <original>K</original>
    <variation>E</variation>
    <location>
        <position position="600"/>
    </location>
</feature>
<proteinExistence type="evidence at protein level"/>
<keyword id="KW-0025">Alternative splicing</keyword>
<keyword id="KW-0158">Chromosome</keyword>
<keyword id="KW-0225">Disease variant</keyword>
<keyword id="KW-0469">Meiosis</keyword>
<keyword id="KW-1267">Proteomics identification</keyword>
<keyword id="KW-1185">Reference proteome</keyword>
<organism>
    <name type="scientific">Homo sapiens</name>
    <name type="common">Human</name>
    <dbReference type="NCBI Taxonomy" id="9606"/>
    <lineage>
        <taxon>Eukaryota</taxon>
        <taxon>Metazoa</taxon>
        <taxon>Chordata</taxon>
        <taxon>Craniata</taxon>
        <taxon>Vertebrata</taxon>
        <taxon>Euteleostomi</taxon>
        <taxon>Mammalia</taxon>
        <taxon>Eutheria</taxon>
        <taxon>Euarchontoglires</taxon>
        <taxon>Primates</taxon>
        <taxon>Haplorrhini</taxon>
        <taxon>Catarrhini</taxon>
        <taxon>Hominidae</taxon>
        <taxon>Homo</taxon>
    </lineage>
</organism>
<accession>Q8IYF3</accession>
<accession>A8K8V6</accession>
<accession>Q5JQQ8</accession>
<accession>Q96LZ4</accession>
<accession>Q96M47</accession>
<accession>Q9BXU6</accession>
<dbReference type="EMBL" id="AK057391">
    <property type="protein sequence ID" value="BAB71465.1"/>
    <property type="molecule type" value="mRNA"/>
</dbReference>
<dbReference type="EMBL" id="AK057523">
    <property type="protein sequence ID" value="BAB71520.1"/>
    <property type="molecule type" value="mRNA"/>
</dbReference>
<dbReference type="EMBL" id="AK292471">
    <property type="protein sequence ID" value="BAF85160.1"/>
    <property type="molecule type" value="mRNA"/>
</dbReference>
<dbReference type="EMBL" id="AL139109">
    <property type="status" value="NOT_ANNOTATED_CDS"/>
    <property type="molecule type" value="Genomic_DNA"/>
</dbReference>
<dbReference type="EMBL" id="AL627071">
    <property type="status" value="NOT_ANNOTATED_CDS"/>
    <property type="molecule type" value="Genomic_DNA"/>
</dbReference>
<dbReference type="EMBL" id="AL627390">
    <property type="status" value="NOT_ANNOTATED_CDS"/>
    <property type="molecule type" value="Genomic_DNA"/>
</dbReference>
<dbReference type="EMBL" id="CH471132">
    <property type="protein sequence ID" value="EAX05331.1"/>
    <property type="molecule type" value="Genomic_DNA"/>
</dbReference>
<dbReference type="EMBL" id="BC036016">
    <property type="protein sequence ID" value="AAH36016.2"/>
    <property type="molecule type" value="mRNA"/>
</dbReference>
<dbReference type="EMBL" id="AF285594">
    <property type="protein sequence ID" value="AAK31973.1"/>
    <property type="status" value="ALT_INIT"/>
    <property type="molecule type" value="mRNA"/>
</dbReference>
<dbReference type="CCDS" id="CCDS35323.1">
    <molecule id="Q8IYF3-1"/>
</dbReference>
<dbReference type="CCDS" id="CCDS43968.1">
    <molecule id="Q8IYF3-3"/>
</dbReference>
<dbReference type="RefSeq" id="NP_001003811.1">
    <molecule id="Q8IYF3-1"/>
    <property type="nucleotide sequence ID" value="NM_001003811.2"/>
</dbReference>
<dbReference type="RefSeq" id="NP_112566.2">
    <molecule id="Q8IYF3-3"/>
    <property type="nucleotide sequence ID" value="NM_031276.3"/>
</dbReference>
<dbReference type="RefSeq" id="XP_011529298.1">
    <property type="nucleotide sequence ID" value="XM_011530996.1"/>
</dbReference>
<dbReference type="SMR" id="Q8IYF3"/>
<dbReference type="BioGRID" id="121093">
    <property type="interactions" value="105"/>
</dbReference>
<dbReference type="FunCoup" id="Q8IYF3">
    <property type="interactions" value="33"/>
</dbReference>
<dbReference type="IntAct" id="Q8IYF3">
    <property type="interactions" value="77"/>
</dbReference>
<dbReference type="MINT" id="Q8IYF3"/>
<dbReference type="STRING" id="9606.ENSP00000379226"/>
<dbReference type="iPTMnet" id="Q8IYF3"/>
<dbReference type="PhosphoSitePlus" id="Q8IYF3"/>
<dbReference type="BioMuta" id="TEX11"/>
<dbReference type="DMDM" id="156637425"/>
<dbReference type="jPOST" id="Q8IYF3"/>
<dbReference type="MassIVE" id="Q8IYF3"/>
<dbReference type="PaxDb" id="9606-ENSP00000379226"/>
<dbReference type="PeptideAtlas" id="Q8IYF3"/>
<dbReference type="ProteomicsDB" id="71166">
    <molecule id="Q8IYF3-1"/>
</dbReference>
<dbReference type="ProteomicsDB" id="71167">
    <molecule id="Q8IYF3-2"/>
</dbReference>
<dbReference type="ProteomicsDB" id="71168">
    <molecule id="Q8IYF3-3"/>
</dbReference>
<dbReference type="Antibodypedia" id="508">
    <property type="antibodies" value="83 antibodies from 26 providers"/>
</dbReference>
<dbReference type="DNASU" id="56159"/>
<dbReference type="Ensembl" id="ENST00000344304.3">
    <molecule id="Q8IYF3-1"/>
    <property type="protein sequence ID" value="ENSP00000340995.3"/>
    <property type="gene ID" value="ENSG00000120498.14"/>
</dbReference>
<dbReference type="Ensembl" id="ENST00000374320.6">
    <molecule id="Q8IYF3-2"/>
    <property type="protein sequence ID" value="ENSP00000363440.2"/>
    <property type="gene ID" value="ENSG00000120498.14"/>
</dbReference>
<dbReference type="Ensembl" id="ENST00000374333.7">
    <molecule id="Q8IYF3-3"/>
    <property type="protein sequence ID" value="ENSP00000363453.2"/>
    <property type="gene ID" value="ENSG00000120498.14"/>
</dbReference>
<dbReference type="Ensembl" id="ENST00000395889.6">
    <molecule id="Q8IYF3-1"/>
    <property type="protein sequence ID" value="ENSP00000379226.2"/>
    <property type="gene ID" value="ENSG00000120498.14"/>
</dbReference>
<dbReference type="GeneID" id="56159"/>
<dbReference type="KEGG" id="hsa:56159"/>
<dbReference type="MANE-Select" id="ENST00000374333.7">
    <molecule id="Q8IYF3-3"/>
    <property type="protein sequence ID" value="ENSP00000363453.2"/>
    <property type="RefSeq nucleotide sequence ID" value="NM_031276.3"/>
    <property type="RefSeq protein sequence ID" value="NP_112566.2"/>
</dbReference>
<dbReference type="UCSC" id="uc004dyk.4">
    <molecule id="Q8IYF3-1"/>
    <property type="organism name" value="human"/>
</dbReference>
<dbReference type="AGR" id="HGNC:11733"/>
<dbReference type="CTD" id="56159"/>
<dbReference type="DisGeNET" id="56159"/>
<dbReference type="GeneCards" id="TEX11"/>
<dbReference type="HGNC" id="HGNC:11733">
    <property type="gene designation" value="TEX11"/>
</dbReference>
<dbReference type="HPA" id="ENSG00000120498">
    <property type="expression patterns" value="Tissue enriched (pancreas)"/>
</dbReference>
<dbReference type="MalaCards" id="TEX11"/>
<dbReference type="MIM" id="300311">
    <property type="type" value="gene"/>
</dbReference>
<dbReference type="MIM" id="309120">
    <property type="type" value="phenotype"/>
</dbReference>
<dbReference type="neXtProt" id="NX_Q8IYF3"/>
<dbReference type="OpenTargets" id="ENSG00000120498"/>
<dbReference type="Orphanet" id="399805">
    <property type="disease" value="Male infertility with azoospermia or oligozoospermia due to single gene mutation"/>
</dbReference>
<dbReference type="PharmGKB" id="PA36450"/>
<dbReference type="VEuPathDB" id="HostDB:ENSG00000120498"/>
<dbReference type="eggNOG" id="KOG4814">
    <property type="taxonomic scope" value="Eukaryota"/>
</dbReference>
<dbReference type="GeneTree" id="ENSGT00390000006492"/>
<dbReference type="HOGENOM" id="CLU_018086_0_0_1"/>
<dbReference type="InParanoid" id="Q8IYF3"/>
<dbReference type="OMA" id="NYETQMN"/>
<dbReference type="OrthoDB" id="65716at2759"/>
<dbReference type="PAN-GO" id="Q8IYF3">
    <property type="GO annotations" value="4 GO annotations based on evolutionary models"/>
</dbReference>
<dbReference type="PhylomeDB" id="Q8IYF3"/>
<dbReference type="TreeFam" id="TF333356"/>
<dbReference type="PathwayCommons" id="Q8IYF3"/>
<dbReference type="SignaLink" id="Q8IYF3"/>
<dbReference type="BioGRID-ORCS" id="56159">
    <property type="hits" value="12 hits in 777 CRISPR screens"/>
</dbReference>
<dbReference type="ChiTaRS" id="TEX11">
    <property type="organism name" value="human"/>
</dbReference>
<dbReference type="GenomeRNAi" id="56159"/>
<dbReference type="Pharos" id="Q8IYF3">
    <property type="development level" value="Tbio"/>
</dbReference>
<dbReference type="PRO" id="PR:Q8IYF3"/>
<dbReference type="Proteomes" id="UP000005640">
    <property type="component" value="Chromosome X"/>
</dbReference>
<dbReference type="RNAct" id="Q8IYF3">
    <property type="molecule type" value="protein"/>
</dbReference>
<dbReference type="Bgee" id="ENSG00000120498">
    <property type="expression patterns" value="Expressed in sperm and 61 other cell types or tissues"/>
</dbReference>
<dbReference type="GO" id="GO:0000801">
    <property type="term" value="C:central element"/>
    <property type="evidence" value="ECO:0000318"/>
    <property type="project" value="GO_Central"/>
</dbReference>
<dbReference type="GO" id="GO:0005694">
    <property type="term" value="C:chromosome"/>
    <property type="evidence" value="ECO:0000250"/>
    <property type="project" value="UniProtKB"/>
</dbReference>
<dbReference type="GO" id="GO:0006915">
    <property type="term" value="P:apoptotic process"/>
    <property type="evidence" value="ECO:0007669"/>
    <property type="project" value="Ensembl"/>
</dbReference>
<dbReference type="GO" id="GO:0051026">
    <property type="term" value="P:chiasma assembly"/>
    <property type="evidence" value="ECO:0007669"/>
    <property type="project" value="Ensembl"/>
</dbReference>
<dbReference type="GO" id="GO:0035234">
    <property type="term" value="P:ectopic germ cell programmed cell death"/>
    <property type="evidence" value="ECO:0007669"/>
    <property type="project" value="Ensembl"/>
</dbReference>
<dbReference type="GO" id="GO:0009566">
    <property type="term" value="P:fertilization"/>
    <property type="evidence" value="ECO:0007669"/>
    <property type="project" value="Ensembl"/>
</dbReference>
<dbReference type="GO" id="GO:0008584">
    <property type="term" value="P:male gonad development"/>
    <property type="evidence" value="ECO:0007669"/>
    <property type="project" value="Ensembl"/>
</dbReference>
<dbReference type="GO" id="GO:0007060">
    <property type="term" value="P:male meiosis chromosome segregation"/>
    <property type="evidence" value="ECO:0000318"/>
    <property type="project" value="GO_Central"/>
</dbReference>
<dbReference type="GO" id="GO:0006311">
    <property type="term" value="P:meiotic gene conversion"/>
    <property type="evidence" value="ECO:0000250"/>
    <property type="project" value="UniProtKB"/>
</dbReference>
<dbReference type="GO" id="GO:0043066">
    <property type="term" value="P:negative regulation of apoptotic process"/>
    <property type="evidence" value="ECO:0007669"/>
    <property type="project" value="Ensembl"/>
</dbReference>
<dbReference type="GO" id="GO:0051093">
    <property type="term" value="P:negative regulation of developmental process"/>
    <property type="evidence" value="ECO:0007669"/>
    <property type="project" value="Ensembl"/>
</dbReference>
<dbReference type="GO" id="GO:2000242">
    <property type="term" value="P:negative regulation of reproductive process"/>
    <property type="evidence" value="ECO:0007669"/>
    <property type="project" value="Ensembl"/>
</dbReference>
<dbReference type="GO" id="GO:0007131">
    <property type="term" value="P:reciprocal meiotic recombination"/>
    <property type="evidence" value="ECO:0000250"/>
    <property type="project" value="UniProtKB"/>
</dbReference>
<dbReference type="GO" id="GO:0000712">
    <property type="term" value="P:resolution of meiotic recombination intermediates"/>
    <property type="evidence" value="ECO:0007669"/>
    <property type="project" value="Ensembl"/>
</dbReference>
<dbReference type="GO" id="GO:0007130">
    <property type="term" value="P:synaptonemal complex assembly"/>
    <property type="evidence" value="ECO:0000318"/>
    <property type="project" value="GO_Central"/>
</dbReference>
<dbReference type="FunFam" id="1.25.40.10:FF:000902">
    <property type="entry name" value="Testis expressed 11"/>
    <property type="match status" value="1"/>
</dbReference>
<dbReference type="Gene3D" id="1.25.40.10">
    <property type="entry name" value="Tetratricopeptide repeat domain"/>
    <property type="match status" value="1"/>
</dbReference>
<dbReference type="InterPro" id="IPR013940">
    <property type="entry name" value="Spo22/ZIP4/TEX11"/>
</dbReference>
<dbReference type="InterPro" id="IPR042861">
    <property type="entry name" value="TEX11"/>
</dbReference>
<dbReference type="InterPro" id="IPR011990">
    <property type="entry name" value="TPR-like_helical_dom_sf"/>
</dbReference>
<dbReference type="InterPro" id="IPR019734">
    <property type="entry name" value="TPR_rpt"/>
</dbReference>
<dbReference type="PANTHER" id="PTHR47083">
    <property type="entry name" value="TESTIS-EXPRESSED PROTEIN 11"/>
    <property type="match status" value="1"/>
</dbReference>
<dbReference type="PANTHER" id="PTHR47083:SF1">
    <property type="entry name" value="TESTIS-EXPRESSED PROTEIN 11"/>
    <property type="match status" value="1"/>
</dbReference>
<dbReference type="Pfam" id="PF08631">
    <property type="entry name" value="SPO22"/>
    <property type="match status" value="1"/>
</dbReference>
<dbReference type="SMART" id="SM00028">
    <property type="entry name" value="TPR"/>
    <property type="match status" value="2"/>
</dbReference>
<dbReference type="SUPFAM" id="SSF48452">
    <property type="entry name" value="TPR-like"/>
    <property type="match status" value="1"/>
</dbReference>
<name>TEX11_HUMAN</name>
<evidence type="ECO:0000250" key="1">
    <source>
        <dbReference type="UniProtKB" id="Q14AT2"/>
    </source>
</evidence>
<evidence type="ECO:0000269" key="2">
    <source>
    </source>
</evidence>
<evidence type="ECO:0000269" key="3">
    <source>
    </source>
</evidence>
<evidence type="ECO:0000269" key="4">
    <source>
    </source>
</evidence>
<evidence type="ECO:0000269" key="5">
    <source>
    </source>
</evidence>
<evidence type="ECO:0000269" key="6">
    <source>
    </source>
</evidence>
<evidence type="ECO:0000269" key="7">
    <source>
    </source>
</evidence>
<evidence type="ECO:0000303" key="8">
    <source>
    </source>
</evidence>
<evidence type="ECO:0000303" key="9">
    <source>
    </source>
</evidence>
<evidence type="ECO:0000303" key="10">
    <source>
    </source>
</evidence>
<evidence type="ECO:0000305" key="11"/>
<reference key="1">
    <citation type="journal article" date="2004" name="Nat. Genet.">
        <title>Complete sequencing and characterization of 21,243 full-length human cDNAs.</title>
        <authorList>
            <person name="Ota T."/>
            <person name="Suzuki Y."/>
            <person name="Nishikawa T."/>
            <person name="Otsuki T."/>
            <person name="Sugiyama T."/>
            <person name="Irie R."/>
            <person name="Wakamatsu A."/>
            <person name="Hayashi K."/>
            <person name="Sato H."/>
            <person name="Nagai K."/>
            <person name="Kimura K."/>
            <person name="Makita H."/>
            <person name="Sekine M."/>
            <person name="Obayashi M."/>
            <person name="Nishi T."/>
            <person name="Shibahara T."/>
            <person name="Tanaka T."/>
            <person name="Ishii S."/>
            <person name="Yamamoto J."/>
            <person name="Saito K."/>
            <person name="Kawai Y."/>
            <person name="Isono Y."/>
            <person name="Nakamura Y."/>
            <person name="Nagahari K."/>
            <person name="Murakami K."/>
            <person name="Yasuda T."/>
            <person name="Iwayanagi T."/>
            <person name="Wagatsuma M."/>
            <person name="Shiratori A."/>
            <person name="Sudo H."/>
            <person name="Hosoiri T."/>
            <person name="Kaku Y."/>
            <person name="Kodaira H."/>
            <person name="Kondo H."/>
            <person name="Sugawara M."/>
            <person name="Takahashi M."/>
            <person name="Kanda K."/>
            <person name="Yokoi T."/>
            <person name="Furuya T."/>
            <person name="Kikkawa E."/>
            <person name="Omura Y."/>
            <person name="Abe K."/>
            <person name="Kamihara K."/>
            <person name="Katsuta N."/>
            <person name="Sato K."/>
            <person name="Tanikawa M."/>
            <person name="Yamazaki M."/>
            <person name="Ninomiya K."/>
            <person name="Ishibashi T."/>
            <person name="Yamashita H."/>
            <person name="Murakawa K."/>
            <person name="Fujimori K."/>
            <person name="Tanai H."/>
            <person name="Kimata M."/>
            <person name="Watanabe M."/>
            <person name="Hiraoka S."/>
            <person name="Chiba Y."/>
            <person name="Ishida S."/>
            <person name="Ono Y."/>
            <person name="Takiguchi S."/>
            <person name="Watanabe S."/>
            <person name="Yosida M."/>
            <person name="Hotuta T."/>
            <person name="Kusano J."/>
            <person name="Kanehori K."/>
            <person name="Takahashi-Fujii A."/>
            <person name="Hara H."/>
            <person name="Tanase T.-O."/>
            <person name="Nomura Y."/>
            <person name="Togiya S."/>
            <person name="Komai F."/>
            <person name="Hara R."/>
            <person name="Takeuchi K."/>
            <person name="Arita M."/>
            <person name="Imose N."/>
            <person name="Musashino K."/>
            <person name="Yuuki H."/>
            <person name="Oshima A."/>
            <person name="Sasaki N."/>
            <person name="Aotsuka S."/>
            <person name="Yoshikawa Y."/>
            <person name="Matsunawa H."/>
            <person name="Ichihara T."/>
            <person name="Shiohata N."/>
            <person name="Sano S."/>
            <person name="Moriya S."/>
            <person name="Momiyama H."/>
            <person name="Satoh N."/>
            <person name="Takami S."/>
            <person name="Terashima Y."/>
            <person name="Suzuki O."/>
            <person name="Nakagawa S."/>
            <person name="Senoh A."/>
            <person name="Mizoguchi H."/>
            <person name="Goto Y."/>
            <person name="Shimizu F."/>
            <person name="Wakebe H."/>
            <person name="Hishigaki H."/>
            <person name="Watanabe T."/>
            <person name="Sugiyama A."/>
            <person name="Takemoto M."/>
            <person name="Kawakami B."/>
            <person name="Yamazaki M."/>
            <person name="Watanabe K."/>
            <person name="Kumagai A."/>
            <person name="Itakura S."/>
            <person name="Fukuzumi Y."/>
            <person name="Fujimori Y."/>
            <person name="Komiyama M."/>
            <person name="Tashiro H."/>
            <person name="Tanigami A."/>
            <person name="Fujiwara T."/>
            <person name="Ono T."/>
            <person name="Yamada K."/>
            <person name="Fujii Y."/>
            <person name="Ozaki K."/>
            <person name="Hirao M."/>
            <person name="Ohmori Y."/>
            <person name="Kawabata A."/>
            <person name="Hikiji T."/>
            <person name="Kobatake N."/>
            <person name="Inagaki H."/>
            <person name="Ikema Y."/>
            <person name="Okamoto S."/>
            <person name="Okitani R."/>
            <person name="Kawakami T."/>
            <person name="Noguchi S."/>
            <person name="Itoh T."/>
            <person name="Shigeta K."/>
            <person name="Senba T."/>
            <person name="Matsumura K."/>
            <person name="Nakajima Y."/>
            <person name="Mizuno T."/>
            <person name="Morinaga M."/>
            <person name="Sasaki M."/>
            <person name="Togashi T."/>
            <person name="Oyama M."/>
            <person name="Hata H."/>
            <person name="Watanabe M."/>
            <person name="Komatsu T."/>
            <person name="Mizushima-Sugano J."/>
            <person name="Satoh T."/>
            <person name="Shirai Y."/>
            <person name="Takahashi Y."/>
            <person name="Nakagawa K."/>
            <person name="Okumura K."/>
            <person name="Nagase T."/>
            <person name="Nomura N."/>
            <person name="Kikuchi H."/>
            <person name="Masuho Y."/>
            <person name="Yamashita R."/>
            <person name="Nakai K."/>
            <person name="Yada T."/>
            <person name="Nakamura Y."/>
            <person name="Ohara O."/>
            <person name="Isogai T."/>
            <person name="Sugano S."/>
        </authorList>
    </citation>
    <scope>NUCLEOTIDE SEQUENCE [LARGE SCALE MRNA] (ISOFORMS 1; 2 AND 3)</scope>
    <source>
        <tissue>Testis</tissue>
    </source>
</reference>
<reference key="2">
    <citation type="journal article" date="2005" name="Nature">
        <title>The DNA sequence of the human X chromosome.</title>
        <authorList>
            <person name="Ross M.T."/>
            <person name="Grafham D.V."/>
            <person name="Coffey A.J."/>
            <person name="Scherer S."/>
            <person name="McLay K."/>
            <person name="Muzny D."/>
            <person name="Platzer M."/>
            <person name="Howell G.R."/>
            <person name="Burrows C."/>
            <person name="Bird C.P."/>
            <person name="Frankish A."/>
            <person name="Lovell F.L."/>
            <person name="Howe K.L."/>
            <person name="Ashurst J.L."/>
            <person name="Fulton R.S."/>
            <person name="Sudbrak R."/>
            <person name="Wen G."/>
            <person name="Jones M.C."/>
            <person name="Hurles M.E."/>
            <person name="Andrews T.D."/>
            <person name="Scott C.E."/>
            <person name="Searle S."/>
            <person name="Ramser J."/>
            <person name="Whittaker A."/>
            <person name="Deadman R."/>
            <person name="Carter N.P."/>
            <person name="Hunt S.E."/>
            <person name="Chen R."/>
            <person name="Cree A."/>
            <person name="Gunaratne P."/>
            <person name="Havlak P."/>
            <person name="Hodgson A."/>
            <person name="Metzker M.L."/>
            <person name="Richards S."/>
            <person name="Scott G."/>
            <person name="Steffen D."/>
            <person name="Sodergren E."/>
            <person name="Wheeler D.A."/>
            <person name="Worley K.C."/>
            <person name="Ainscough R."/>
            <person name="Ambrose K.D."/>
            <person name="Ansari-Lari M.A."/>
            <person name="Aradhya S."/>
            <person name="Ashwell R.I."/>
            <person name="Babbage A.K."/>
            <person name="Bagguley C.L."/>
            <person name="Ballabio A."/>
            <person name="Banerjee R."/>
            <person name="Barker G.E."/>
            <person name="Barlow K.F."/>
            <person name="Barrett I.P."/>
            <person name="Bates K.N."/>
            <person name="Beare D.M."/>
            <person name="Beasley H."/>
            <person name="Beasley O."/>
            <person name="Beck A."/>
            <person name="Bethel G."/>
            <person name="Blechschmidt K."/>
            <person name="Brady N."/>
            <person name="Bray-Allen S."/>
            <person name="Bridgeman A.M."/>
            <person name="Brown A.J."/>
            <person name="Brown M.J."/>
            <person name="Bonnin D."/>
            <person name="Bruford E.A."/>
            <person name="Buhay C."/>
            <person name="Burch P."/>
            <person name="Burford D."/>
            <person name="Burgess J."/>
            <person name="Burrill W."/>
            <person name="Burton J."/>
            <person name="Bye J.M."/>
            <person name="Carder C."/>
            <person name="Carrel L."/>
            <person name="Chako J."/>
            <person name="Chapman J.C."/>
            <person name="Chavez D."/>
            <person name="Chen E."/>
            <person name="Chen G."/>
            <person name="Chen Y."/>
            <person name="Chen Z."/>
            <person name="Chinault C."/>
            <person name="Ciccodicola A."/>
            <person name="Clark S.Y."/>
            <person name="Clarke G."/>
            <person name="Clee C.M."/>
            <person name="Clegg S."/>
            <person name="Clerc-Blankenburg K."/>
            <person name="Clifford K."/>
            <person name="Cobley V."/>
            <person name="Cole C.G."/>
            <person name="Conquer J.S."/>
            <person name="Corby N."/>
            <person name="Connor R.E."/>
            <person name="David R."/>
            <person name="Davies J."/>
            <person name="Davis C."/>
            <person name="Davis J."/>
            <person name="Delgado O."/>
            <person name="Deshazo D."/>
            <person name="Dhami P."/>
            <person name="Ding Y."/>
            <person name="Dinh H."/>
            <person name="Dodsworth S."/>
            <person name="Draper H."/>
            <person name="Dugan-Rocha S."/>
            <person name="Dunham A."/>
            <person name="Dunn M."/>
            <person name="Durbin K.J."/>
            <person name="Dutta I."/>
            <person name="Eades T."/>
            <person name="Ellwood M."/>
            <person name="Emery-Cohen A."/>
            <person name="Errington H."/>
            <person name="Evans K.L."/>
            <person name="Faulkner L."/>
            <person name="Francis F."/>
            <person name="Frankland J."/>
            <person name="Fraser A.E."/>
            <person name="Galgoczy P."/>
            <person name="Gilbert J."/>
            <person name="Gill R."/>
            <person name="Gloeckner G."/>
            <person name="Gregory S.G."/>
            <person name="Gribble S."/>
            <person name="Griffiths C."/>
            <person name="Grocock R."/>
            <person name="Gu Y."/>
            <person name="Gwilliam R."/>
            <person name="Hamilton C."/>
            <person name="Hart E.A."/>
            <person name="Hawes A."/>
            <person name="Heath P.D."/>
            <person name="Heitmann K."/>
            <person name="Hennig S."/>
            <person name="Hernandez J."/>
            <person name="Hinzmann B."/>
            <person name="Ho S."/>
            <person name="Hoffs M."/>
            <person name="Howden P.J."/>
            <person name="Huckle E.J."/>
            <person name="Hume J."/>
            <person name="Hunt P.J."/>
            <person name="Hunt A.R."/>
            <person name="Isherwood J."/>
            <person name="Jacob L."/>
            <person name="Johnson D."/>
            <person name="Jones S."/>
            <person name="de Jong P.J."/>
            <person name="Joseph S.S."/>
            <person name="Keenan S."/>
            <person name="Kelly S."/>
            <person name="Kershaw J.K."/>
            <person name="Khan Z."/>
            <person name="Kioschis P."/>
            <person name="Klages S."/>
            <person name="Knights A.J."/>
            <person name="Kosiura A."/>
            <person name="Kovar-Smith C."/>
            <person name="Laird G.K."/>
            <person name="Langford C."/>
            <person name="Lawlor S."/>
            <person name="Leversha M."/>
            <person name="Lewis L."/>
            <person name="Liu W."/>
            <person name="Lloyd C."/>
            <person name="Lloyd D.M."/>
            <person name="Loulseged H."/>
            <person name="Loveland J.E."/>
            <person name="Lovell J.D."/>
            <person name="Lozado R."/>
            <person name="Lu J."/>
            <person name="Lyne R."/>
            <person name="Ma J."/>
            <person name="Maheshwari M."/>
            <person name="Matthews L.H."/>
            <person name="McDowall J."/>
            <person name="McLaren S."/>
            <person name="McMurray A."/>
            <person name="Meidl P."/>
            <person name="Meitinger T."/>
            <person name="Milne S."/>
            <person name="Miner G."/>
            <person name="Mistry S.L."/>
            <person name="Morgan M."/>
            <person name="Morris S."/>
            <person name="Mueller I."/>
            <person name="Mullikin J.C."/>
            <person name="Nguyen N."/>
            <person name="Nordsiek G."/>
            <person name="Nyakatura G."/>
            <person name="O'dell C.N."/>
            <person name="Okwuonu G."/>
            <person name="Palmer S."/>
            <person name="Pandian R."/>
            <person name="Parker D."/>
            <person name="Parrish J."/>
            <person name="Pasternak S."/>
            <person name="Patel D."/>
            <person name="Pearce A.V."/>
            <person name="Pearson D.M."/>
            <person name="Pelan S.E."/>
            <person name="Perez L."/>
            <person name="Porter K.M."/>
            <person name="Ramsey Y."/>
            <person name="Reichwald K."/>
            <person name="Rhodes S."/>
            <person name="Ridler K.A."/>
            <person name="Schlessinger D."/>
            <person name="Schueler M.G."/>
            <person name="Sehra H.K."/>
            <person name="Shaw-Smith C."/>
            <person name="Shen H."/>
            <person name="Sheridan E.M."/>
            <person name="Shownkeen R."/>
            <person name="Skuce C.D."/>
            <person name="Smith M.L."/>
            <person name="Sotheran E.C."/>
            <person name="Steingruber H.E."/>
            <person name="Steward C.A."/>
            <person name="Storey R."/>
            <person name="Swann R.M."/>
            <person name="Swarbreck D."/>
            <person name="Tabor P.E."/>
            <person name="Taudien S."/>
            <person name="Taylor T."/>
            <person name="Teague B."/>
            <person name="Thomas K."/>
            <person name="Thorpe A."/>
            <person name="Timms K."/>
            <person name="Tracey A."/>
            <person name="Trevanion S."/>
            <person name="Tromans A.C."/>
            <person name="d'Urso M."/>
            <person name="Verduzco D."/>
            <person name="Villasana D."/>
            <person name="Waldron L."/>
            <person name="Wall M."/>
            <person name="Wang Q."/>
            <person name="Warren J."/>
            <person name="Warry G.L."/>
            <person name="Wei X."/>
            <person name="West A."/>
            <person name="Whitehead S.L."/>
            <person name="Whiteley M.N."/>
            <person name="Wilkinson J.E."/>
            <person name="Willey D.L."/>
            <person name="Williams G."/>
            <person name="Williams L."/>
            <person name="Williamson A."/>
            <person name="Williamson H."/>
            <person name="Wilming L."/>
            <person name="Woodmansey R.L."/>
            <person name="Wray P.W."/>
            <person name="Yen J."/>
            <person name="Zhang J."/>
            <person name="Zhou J."/>
            <person name="Zoghbi H."/>
            <person name="Zorilla S."/>
            <person name="Buck D."/>
            <person name="Reinhardt R."/>
            <person name="Poustka A."/>
            <person name="Rosenthal A."/>
            <person name="Lehrach H."/>
            <person name="Meindl A."/>
            <person name="Minx P.J."/>
            <person name="Hillier L.W."/>
            <person name="Willard H.F."/>
            <person name="Wilson R.K."/>
            <person name="Waterston R.H."/>
            <person name="Rice C.M."/>
            <person name="Vaudin M."/>
            <person name="Coulson A."/>
            <person name="Nelson D.L."/>
            <person name="Weinstock G."/>
            <person name="Sulston J.E."/>
            <person name="Durbin R.M."/>
            <person name="Hubbard T."/>
            <person name="Gibbs R.A."/>
            <person name="Beck S."/>
            <person name="Rogers J."/>
            <person name="Bentley D.R."/>
        </authorList>
    </citation>
    <scope>NUCLEOTIDE SEQUENCE [LARGE SCALE GENOMIC DNA]</scope>
</reference>
<reference key="3">
    <citation type="submission" date="2005-09" db="EMBL/GenBank/DDBJ databases">
        <authorList>
            <person name="Mural R.J."/>
            <person name="Istrail S."/>
            <person name="Sutton G.G."/>
            <person name="Florea L."/>
            <person name="Halpern A.L."/>
            <person name="Mobarry C.M."/>
            <person name="Lippert R."/>
            <person name="Walenz B."/>
            <person name="Shatkay H."/>
            <person name="Dew I."/>
            <person name="Miller J.R."/>
            <person name="Flanigan M.J."/>
            <person name="Edwards N.J."/>
            <person name="Bolanos R."/>
            <person name="Fasulo D."/>
            <person name="Halldorsson B.V."/>
            <person name="Hannenhalli S."/>
            <person name="Turner R."/>
            <person name="Yooseph S."/>
            <person name="Lu F."/>
            <person name="Nusskern D.R."/>
            <person name="Shue B.C."/>
            <person name="Zheng X.H."/>
            <person name="Zhong F."/>
            <person name="Delcher A.L."/>
            <person name="Huson D.H."/>
            <person name="Kravitz S.A."/>
            <person name="Mouchard L."/>
            <person name="Reinert K."/>
            <person name="Remington K.A."/>
            <person name="Clark A.G."/>
            <person name="Waterman M.S."/>
            <person name="Eichler E.E."/>
            <person name="Adams M.D."/>
            <person name="Hunkapiller M.W."/>
            <person name="Myers E.W."/>
            <person name="Venter J.C."/>
        </authorList>
    </citation>
    <scope>NUCLEOTIDE SEQUENCE [LARGE SCALE GENOMIC DNA]</scope>
</reference>
<reference key="4">
    <citation type="journal article" date="2004" name="Genome Res.">
        <title>The status, quality, and expansion of the NIH full-length cDNA project: the Mammalian Gene Collection (MGC).</title>
        <authorList>
            <consortium name="The MGC Project Team"/>
        </authorList>
    </citation>
    <scope>NUCLEOTIDE SEQUENCE [LARGE SCALE MRNA] (ISOFORM 3)</scope>
    <scope>VARIANT LYS-451</scope>
    <source>
        <tissue>Testis</tissue>
    </source>
</reference>
<reference key="5">
    <citation type="journal article" date="2001" name="Nat. Genet.">
        <title>An abundance of X-linked genes expressed in spermatogonia.</title>
        <authorList>
            <person name="Wang P.J."/>
            <person name="McCarrey J.R."/>
            <person name="Yang F."/>
            <person name="Page D.C."/>
        </authorList>
    </citation>
    <scope>NUCLEOTIDE SEQUENCE [MRNA] OF 20-940 (ISOFORM 3)</scope>
    <source>
        <tissue>Testis</tissue>
    </source>
</reference>
<reference key="6">
    <citation type="journal article" date="2008" name="PLoS Genet.">
        <title>ZIP4H (TEX11) deficiency in the mouse impairs meiotic double strand break repair and the regulation of crossing over.</title>
        <authorList>
            <person name="Adelman C.A."/>
            <person name="Petrini J.H."/>
        </authorList>
    </citation>
    <scope>TISSUE SPECIFICITY</scope>
</reference>
<reference key="7">
    <citation type="journal article" date="2015" name="N. Engl. J. Med.">
        <title>X-linked TEX11 mutations, meiotic arrest, and azoospermia in infertile men.</title>
        <authorList>
            <person name="Yatsenko A.N."/>
            <person name="Georgiadis A.P."/>
            <person name="Roepke A."/>
            <person name="Berman A.J."/>
            <person name="Jaffe T."/>
            <person name="Olszewska M."/>
            <person name="Westernstroeer B."/>
            <person name="Sanfilippo J."/>
            <person name="Kurpisz M."/>
            <person name="Rajkovic A."/>
            <person name="Yatsenko S.A."/>
            <person name="Kliesch S."/>
            <person name="Schlatt S."/>
            <person name="Tuettelmann F."/>
        </authorList>
    </citation>
    <scope>INVOLVEMENT IN SPGFX2</scope>
    <scope>VARIANTS SPGFX2 VAL-171 AND THR-698</scope>
</reference>
<reference key="8">
    <citation type="journal article" date="2018" name="PLoS Genet.">
        <title>SHOC1 is a ERCC4-(HhH)2-like protein, integral to the formation of crossover recombination intermediates during mammalian meiosis.</title>
        <authorList>
            <person name="Guiraldelli M.F."/>
            <person name="Felberg A."/>
            <person name="Almeida L.P."/>
            <person name="Parikh A."/>
            <person name="de Castro R.O."/>
            <person name="Pezza R.J."/>
        </authorList>
    </citation>
    <scope>INTERACTION WITH SHOC1</scope>
</reference>
<reference key="9">
    <citation type="journal article" date="2017" name="Andrology">
        <title>Next-generation sequencing for patients with non-obstructive azoospermia: implications for significant roles of monogenic/oligogenic mutations.</title>
        <authorList>
            <person name="Nakamura S."/>
            <person name="Miyado M."/>
            <person name="Saito K."/>
            <person name="Katsumi M."/>
            <person name="Nakamura A."/>
            <person name="Kobori Y."/>
            <person name="Tanaka Y."/>
            <person name="Ishikawa H."/>
            <person name="Yoshida A."/>
            <person name="Okada H."/>
            <person name="Hata K."/>
            <person name="Nakabayashi K."/>
            <person name="Okamura K."/>
            <person name="Ogata H."/>
            <person name="Matsubara Y."/>
            <person name="Ogata T."/>
            <person name="Nakai H."/>
            <person name="Fukami M."/>
        </authorList>
    </citation>
    <scope>VARIANT SPGFX2 VAL-171</scope>
</reference>
<reference key="10">
    <citation type="journal article" date="2020" name="Genet. Med.">
        <title>Genetic dissection of spermatogenic arrest through exome analysis: clinical implications for the management of azoospermic men.</title>
        <authorList>
            <person name="Krausz C."/>
            <person name="Riera-Escamilla A."/>
            <person name="Moreno-Mendoza D."/>
            <person name="Holleman K."/>
            <person name="Cioppi F."/>
            <person name="Algaba F."/>
            <person name="Pybus M."/>
            <person name="Friedrich C."/>
            <person name="Wyrwoll M.J."/>
            <person name="Casamonti E."/>
            <person name="Pietroforte S."/>
            <person name="Nagirnaja L."/>
            <person name="Lopes A.M."/>
            <person name="Kliesch S."/>
            <person name="Pilatz A."/>
            <person name="Carrell D.T."/>
            <person name="Conrad D.F."/>
            <person name="Ars E."/>
            <person name="Ruiz-Castane E."/>
            <person name="Aston K.I."/>
            <person name="Baarends W.M."/>
            <person name="Tuettelmann F."/>
        </authorList>
    </citation>
    <scope>INVOLVEMENT IN SPGFX2</scope>
</reference>
<comment type="function">
    <text evidence="1">Regulator of crossing-over during meiosis. Involved in initiation and/or maintenance of chromosome synapsis and formation of crossovers.</text>
</comment>
<comment type="subunit">
    <text evidence="1 6">Interacts with SYCP2. Interacts with PBXIP1; may prevent interaction between PBXIP1 and ESR2 (By similarity). Interacts with SHOC1 (PubMed:29742103). Interacts with REDIC1.</text>
</comment>
<comment type="interaction">
    <interactant intactId="EBI-742397">
        <id>Q8IYF3</id>
    </interactant>
    <interactant intactId="EBI-7162175">
        <id>Q9HBH7</id>
        <label>BEX1</label>
    </interactant>
    <organismsDiffer>false</organismsDiffer>
    <experiments>3</experiments>
</comment>
<comment type="interaction">
    <interactant intactId="EBI-742397">
        <id>Q8IYF3</id>
    </interactant>
    <interactant intactId="EBI-744076">
        <id>Q96FH0</id>
        <label>BORCS8</label>
    </interactant>
    <organismsDiffer>false</organismsDiffer>
    <experiments>5</experiments>
</comment>
<comment type="interaction">
    <interactant intactId="EBI-742397">
        <id>Q8IYF3</id>
    </interactant>
    <interactant intactId="EBI-10244057">
        <id>Q5I0X4</id>
        <label>C6orf226</label>
    </interactant>
    <organismsDiffer>false</organismsDiffer>
    <experiments>3</experiments>
</comment>
<comment type="interaction">
    <interactant intactId="EBI-742397">
        <id>Q8IYF3</id>
    </interactant>
    <interactant intactId="EBI-741724">
        <id>Q8NA61</id>
        <label>CBY2</label>
    </interactant>
    <organismsDiffer>false</organismsDiffer>
    <experiments>3</experiments>
</comment>
<comment type="interaction">
    <interactant intactId="EBI-742397">
        <id>Q8IYF3</id>
    </interactant>
    <interactant intactId="EBI-10238351">
        <id>Q9NVL8</id>
        <label>CCDC198</label>
    </interactant>
    <organismsDiffer>false</organismsDiffer>
    <experiments>3</experiments>
</comment>
<comment type="interaction">
    <interactant intactId="EBI-742397">
        <id>Q8IYF3</id>
    </interactant>
    <interactant intactId="EBI-375077">
        <id>P38936</id>
        <label>CDKN1A</label>
    </interactant>
    <organismsDiffer>false</organismsDiffer>
    <experiments>4</experiments>
</comment>
<comment type="interaction">
    <interactant intactId="EBI-742397">
        <id>Q8IYF3</id>
    </interactant>
    <interactant intactId="EBI-10250303">
        <id>Q6IPU0</id>
        <label>CENPP</label>
    </interactant>
    <organismsDiffer>false</organismsDiffer>
    <experiments>3</experiments>
</comment>
<comment type="interaction">
    <interactant intactId="EBI-742397">
        <id>Q8IYF3</id>
    </interactant>
    <interactant intactId="EBI-10318410">
        <id>Q9P218-2</id>
        <label>COL20A1</label>
    </interactant>
    <organismsDiffer>false</organismsDiffer>
    <experiments>3</experiments>
</comment>
<comment type="interaction">
    <interactant intactId="EBI-742397">
        <id>Q8IYF3</id>
    </interactant>
    <interactant intactId="EBI-2798068">
        <id>O95715</id>
        <label>CXCL14</label>
    </interactant>
    <organismsDiffer>false</organismsDiffer>
    <experiments>3</experiments>
</comment>
<comment type="interaction">
    <interactant intactId="EBI-742397">
        <id>Q8IYF3</id>
    </interactant>
    <interactant intactId="EBI-7357329">
        <id>Q9H596</id>
        <label>DUSP21</label>
    </interactant>
    <organismsDiffer>false</organismsDiffer>
    <experiments>3</experiments>
</comment>
<comment type="interaction">
    <interactant intactId="EBI-742397">
        <id>Q8IYF3</id>
    </interactant>
    <interactant intactId="EBI-749727">
        <id>Q8NDB6</id>
        <label>FAM156A</label>
    </interactant>
    <organismsDiffer>false</organismsDiffer>
    <experiments>3</experiments>
</comment>
<comment type="interaction">
    <interactant intactId="EBI-742397">
        <id>Q8IYF3</id>
    </interactant>
    <interactant intactId="EBI-10244131">
        <id>Q8TES7-6</id>
        <label>FBF1</label>
    </interactant>
    <organismsDiffer>false</organismsDiffer>
    <experiments>3</experiments>
</comment>
<comment type="interaction">
    <interactant intactId="EBI-742397">
        <id>Q8IYF3</id>
    </interactant>
    <interactant intactId="EBI-923440">
        <id>Q8WXI9</id>
        <label>GATAD2B</label>
    </interactant>
    <organismsDiffer>false</organismsDiffer>
    <experiments>3</experiments>
</comment>
<comment type="interaction">
    <interactant intactId="EBI-742397">
        <id>Q8IYF3</id>
    </interactant>
    <interactant intactId="EBI-749235">
        <id>Q5T013</id>
        <label>HYI</label>
    </interactant>
    <organismsDiffer>false</organismsDiffer>
    <experiments>4</experiments>
</comment>
<comment type="interaction">
    <interactant intactId="EBI-742397">
        <id>Q8IYF3</id>
    </interactant>
    <interactant intactId="EBI-10263367">
        <id>A0A0C4DG38</id>
        <label>ING3</label>
    </interactant>
    <organismsDiffer>false</organismsDiffer>
    <experiments>3</experiments>
</comment>
<comment type="interaction">
    <interactant intactId="EBI-742397">
        <id>Q8IYF3</id>
    </interactant>
    <interactant intactId="EBI-748884">
        <id>Q96GY3</id>
        <label>LIN37</label>
    </interactant>
    <organismsDiffer>false</organismsDiffer>
    <experiments>2</experiments>
</comment>
<comment type="interaction">
    <interactant intactId="EBI-742397">
        <id>Q8IYF3</id>
    </interactant>
    <interactant intactId="EBI-713568">
        <id>P45984</id>
        <label>MAPK9</label>
    </interactant>
    <organismsDiffer>false</organismsDiffer>
    <experiments>3</experiments>
</comment>
<comment type="interaction">
    <interactant intactId="EBI-742397">
        <id>Q8IYF3</id>
    </interactant>
    <interactant intactId="EBI-947402">
        <id>O60336</id>
        <label>MAPKBP1</label>
    </interactant>
    <organismsDiffer>false</organismsDiffer>
    <experiments>3</experiments>
</comment>
<comment type="interaction">
    <interactant intactId="EBI-742397">
        <id>Q8IYF3</id>
    </interactant>
    <interactant intactId="EBI-10318831">
        <id>Q9P2K5-2</id>
        <label>MYEF2</label>
    </interactant>
    <organismsDiffer>false</organismsDiffer>
    <experiments>3</experiments>
</comment>
<comment type="interaction">
    <interactant intactId="EBI-742397">
        <id>Q8IYF3</id>
    </interactant>
    <interactant intactId="EBI-10178578">
        <id>I6L9F6</id>
        <label>NEFL</label>
    </interactant>
    <organismsDiffer>false</organismsDiffer>
    <experiments>4</experiments>
</comment>
<comment type="interaction">
    <interactant intactId="EBI-742397">
        <id>Q8IYF3</id>
    </interactant>
    <interactant intactId="EBI-739990">
        <id>Q96HA1</id>
        <label>POM121</label>
    </interactant>
    <organismsDiffer>false</organismsDiffer>
    <experiments>4</experiments>
</comment>
<comment type="interaction">
    <interactant intactId="EBI-742397">
        <id>Q8IYF3</id>
    </interactant>
    <interactant intactId="EBI-2557469">
        <id>Q6NYC8</id>
        <label>PPP1R18</label>
    </interactant>
    <organismsDiffer>false</organismsDiffer>
    <experiments>3</experiments>
</comment>
<comment type="interaction">
    <interactant intactId="EBI-742397">
        <id>Q8IYF3</id>
    </interactant>
    <interactant intactId="EBI-10262361">
        <id>Q8IX06</id>
        <label>REXO1L1P</label>
    </interactant>
    <organismsDiffer>false</organismsDiffer>
    <experiments>3</experiments>
</comment>
<comment type="interaction">
    <interactant intactId="EBI-742397">
        <id>Q8IYF3</id>
    </interactant>
    <interactant intactId="EBI-10265323">
        <id>Q8N443</id>
        <label>RIBC1</label>
    </interactant>
    <organismsDiffer>false</organismsDiffer>
    <experiments>3</experiments>
</comment>
<comment type="interaction">
    <interactant intactId="EBI-742397">
        <id>Q8IYF3</id>
    </interactant>
    <interactant intactId="EBI-693002">
        <id>Q8WYJ6</id>
        <label>SEPTIN1</label>
    </interactant>
    <organismsDiffer>false</organismsDiffer>
    <experiments>3</experiments>
</comment>
<comment type="interaction">
    <interactant intactId="EBI-742397">
        <id>Q8IYF3</id>
    </interactant>
    <interactant intactId="EBI-632715">
        <id>Q13573</id>
        <label>SNW1</label>
    </interactant>
    <organismsDiffer>false</organismsDiffer>
    <experiments>3</experiments>
</comment>
<comment type="interaction">
    <interactant intactId="EBI-742397">
        <id>Q8IYF3</id>
    </interactant>
    <interactant intactId="EBI-751422">
        <id>Q9UNH6</id>
        <label>SNX7</label>
    </interactant>
    <organismsDiffer>false</organismsDiffer>
    <experiments>4</experiments>
</comment>
<comment type="interaction">
    <interactant intactId="EBI-742397">
        <id>Q8IYF3</id>
    </interactant>
    <interactant intactId="EBI-714194">
        <id>Q93045</id>
        <label>STMN2</label>
    </interactant>
    <organismsDiffer>false</organismsDiffer>
    <experiments>5</experiments>
</comment>
<comment type="interaction">
    <interactant intactId="EBI-742397">
        <id>Q8IYF3</id>
    </interactant>
    <interactant intactId="EBI-8787464">
        <id>Q9NU19</id>
        <label>TBC1D22B</label>
    </interactant>
    <organismsDiffer>false</organismsDiffer>
    <experiments>3</experiments>
</comment>
<comment type="interaction">
    <interactant intactId="EBI-742397">
        <id>Q8IYF3</id>
    </interactant>
    <interactant intactId="EBI-2515360">
        <id>Q9BVW5</id>
        <label>TIPIN</label>
    </interactant>
    <organismsDiffer>false</organismsDiffer>
    <experiments>3</experiments>
</comment>
<comment type="interaction">
    <interactant intactId="EBI-742397">
        <id>Q8IYF3</id>
    </interactant>
    <interactant intactId="EBI-10261521">
        <id>Q8IV54</id>
        <label>TSC22D4</label>
    </interactant>
    <organismsDiffer>false</organismsDiffer>
    <experiments>3</experiments>
</comment>
<comment type="interaction">
    <interactant intactId="EBI-742397">
        <id>Q8IYF3</id>
    </interactant>
    <interactant intactId="EBI-10225961">
        <id>Q08E77</id>
        <label>UTP14C</label>
    </interactant>
    <organismsDiffer>false</organismsDiffer>
    <experiments>3</experiments>
</comment>
<comment type="interaction">
    <interactant intactId="EBI-11523345">
        <id>Q8IYF3-3</id>
    </interactant>
    <interactant intactId="EBI-946046">
        <id>P54252</id>
        <label>ATXN3</label>
    </interactant>
    <organismsDiffer>false</organismsDiffer>
    <experiments>6</experiments>
</comment>
<comment type="interaction">
    <interactant intactId="EBI-11523345">
        <id>Q8IYF3-3</id>
    </interactant>
    <interactant intactId="EBI-707714">
        <id>Q92843</id>
        <label>BCL2L2</label>
    </interactant>
    <organismsDiffer>false</organismsDiffer>
    <experiments>3</experiments>
</comment>
<comment type="interaction">
    <interactant intactId="EBI-11523345">
        <id>Q8IYF3-3</id>
    </interactant>
    <interactant intactId="EBI-744076">
        <id>Q96FH0</id>
        <label>BORCS8</label>
    </interactant>
    <organismsDiffer>false</organismsDiffer>
    <experiments>5</experiments>
</comment>
<comment type="interaction">
    <interactant intactId="EBI-11523345">
        <id>Q8IYF3-3</id>
    </interactant>
    <interactant intactId="EBI-5666615">
        <id>Q5PSV4</id>
        <label>BRMS1L</label>
    </interactant>
    <organismsDiffer>false</organismsDiffer>
    <experiments>3</experiments>
</comment>
<comment type="interaction">
    <interactant intactId="EBI-11523345">
        <id>Q8IYF3-3</id>
    </interactant>
    <interactant intactId="EBI-11524851">
        <id>Q8NA61-2</id>
        <label>CBY2</label>
    </interactant>
    <organismsDiffer>false</organismsDiffer>
    <experiments>3</experiments>
</comment>
<comment type="interaction">
    <interactant intactId="EBI-11523345">
        <id>Q8IYF3-3</id>
    </interactant>
    <interactant intactId="EBI-11748295">
        <id>E9PSE9</id>
        <label>CCDC198</label>
    </interactant>
    <organismsDiffer>false</organismsDiffer>
    <experiments>4</experiments>
</comment>
<comment type="interaction">
    <interactant intactId="EBI-11523345">
        <id>Q8IYF3-3</id>
    </interactant>
    <interactant intactId="EBI-12222807">
        <id>P04233-2</id>
        <label>CD74</label>
    </interactant>
    <organismsDiffer>false</organismsDiffer>
    <experiments>3</experiments>
</comment>
<comment type="interaction">
    <interactant intactId="EBI-11523345">
        <id>Q8IYF3-3</id>
    </interactant>
    <interactant intactId="EBI-12344751">
        <id>Q5SZL2-5</id>
        <label>CEP85L</label>
    </interactant>
    <organismsDiffer>false</organismsDiffer>
    <experiments>3</experiments>
</comment>
<comment type="interaction">
    <interactant intactId="EBI-11523345">
        <id>Q8IYF3-3</id>
    </interactant>
    <interactant intactId="EBI-715275">
        <id>Q08495</id>
        <label>DMTN</label>
    </interactant>
    <organismsDiffer>false</organismsDiffer>
    <experiments>3</experiments>
</comment>
<comment type="interaction">
    <interactant intactId="EBI-11523345">
        <id>Q8IYF3-3</id>
    </interactant>
    <interactant intactId="EBI-7357329">
        <id>Q9H596</id>
        <label>DUSP21</label>
    </interactant>
    <organismsDiffer>false</organismsDiffer>
    <experiments>3</experiments>
</comment>
<comment type="interaction">
    <interactant intactId="EBI-11523345">
        <id>Q8IYF3-3</id>
    </interactant>
    <interactant intactId="EBI-743105">
        <id>Q5JVL4</id>
        <label>EFHC1</label>
    </interactant>
    <organismsDiffer>false</organismsDiffer>
    <experiments>6</experiments>
</comment>
<comment type="interaction">
    <interactant intactId="EBI-11523345">
        <id>Q8IYF3-3</id>
    </interactant>
    <interactant intactId="EBI-12013806">
        <id>Q6NZ36-4</id>
        <label>FAAP20</label>
    </interactant>
    <organismsDiffer>false</organismsDiffer>
    <experiments>3</experiments>
</comment>
<comment type="interaction">
    <interactant intactId="EBI-11523345">
        <id>Q8IYF3-3</id>
    </interactant>
    <interactant intactId="EBI-7225287">
        <id>Q96MY7</id>
        <label>FAM161B</label>
    </interactant>
    <organismsDiffer>false</organismsDiffer>
    <experiments>3</experiments>
</comment>
<comment type="interaction">
    <interactant intactId="EBI-11523345">
        <id>Q8IYF3-3</id>
    </interactant>
    <interactant intactId="EBI-10694567">
        <id>Q8IXS0</id>
        <label>FAM217A</label>
    </interactant>
    <organismsDiffer>false</organismsDiffer>
    <experiments>3</experiments>
</comment>
<comment type="interaction">
    <interactant intactId="EBI-11523345">
        <id>Q8IYF3-3</id>
    </interactant>
    <interactant intactId="EBI-347538">
        <id>Q9Y4H4</id>
        <label>GPSM3</label>
    </interactant>
    <organismsDiffer>false</organismsDiffer>
    <experiments>3</experiments>
</comment>
<comment type="interaction">
    <interactant intactId="EBI-11523345">
        <id>Q8IYF3-3</id>
    </interactant>
    <interactant intactId="EBI-5235612">
        <id>A8MXD5</id>
        <label>GRXCR1</label>
    </interactant>
    <organismsDiffer>false</organismsDiffer>
    <experiments>3</experiments>
</comment>
<comment type="interaction">
    <interactant intactId="EBI-11523345">
        <id>Q8IYF3-3</id>
    </interactant>
    <interactant intactId="EBI-3893317">
        <id>P09067</id>
        <label>HOXB5</label>
    </interactant>
    <organismsDiffer>false</organismsDiffer>
    <experiments>3</experiments>
</comment>
<comment type="interaction">
    <interactant intactId="EBI-11523345">
        <id>Q8IYF3-3</id>
    </interactant>
    <interactant intactId="EBI-10263367">
        <id>A0A0C4DG38</id>
        <label>ING3</label>
    </interactant>
    <organismsDiffer>false</organismsDiffer>
    <experiments>3</experiments>
</comment>
<comment type="interaction">
    <interactant intactId="EBI-11523345">
        <id>Q8IYF3-3</id>
    </interactant>
    <interactant intactId="EBI-2556193">
        <id>Q63ZY3</id>
        <label>KANK2</label>
    </interactant>
    <organismsDiffer>false</organismsDiffer>
    <experiments>3</experiments>
</comment>
<comment type="interaction">
    <interactant intactId="EBI-11523345">
        <id>Q8IYF3-3</id>
    </interactant>
    <interactant intactId="EBI-2505886">
        <id>Q9H3F6</id>
        <label>KCTD10</label>
    </interactant>
    <organismsDiffer>false</organismsDiffer>
    <experiments>3</experiments>
</comment>
<comment type="interaction">
    <interactant intactId="EBI-11523345">
        <id>Q8IYF3-3</id>
    </interactant>
    <interactant intactId="EBI-740907">
        <id>P04259</id>
        <label>KRT6B</label>
    </interactant>
    <organismsDiffer>false</organismsDiffer>
    <experiments>3</experiments>
</comment>
<comment type="interaction">
    <interactant intactId="EBI-11523345">
        <id>Q8IYF3-3</id>
    </interactant>
    <interactant intactId="EBI-12287681">
        <id>Q5VUJ6-2</id>
        <label>LRCH2</label>
    </interactant>
    <organismsDiffer>false</organismsDiffer>
    <experiments>3</experiments>
</comment>
<comment type="interaction">
    <interactant intactId="EBI-11523345">
        <id>Q8IYF3-3</id>
    </interactant>
    <interactant intactId="EBI-12218159">
        <id>Q1X8D7</id>
        <label>LRRC36</label>
    </interactant>
    <organismsDiffer>false</organismsDiffer>
    <experiments>3</experiments>
</comment>
<comment type="interaction">
    <interactant intactId="EBI-11523345">
        <id>Q8IYF3-3</id>
    </interactant>
    <interactant intactId="EBI-713568">
        <id>P45984</id>
        <label>MAPK9</label>
    </interactant>
    <organismsDiffer>false</organismsDiffer>
    <experiments>3</experiments>
</comment>
<comment type="interaction">
    <interactant intactId="EBI-11523345">
        <id>Q8IYF3-3</id>
    </interactant>
    <interactant intactId="EBI-947402">
        <id>O60336</id>
        <label>MAPKBP1</label>
    </interactant>
    <organismsDiffer>false</organismsDiffer>
    <experiments>3</experiments>
</comment>
<comment type="interaction">
    <interactant intactId="EBI-11523345">
        <id>Q8IYF3-3</id>
    </interactant>
    <interactant intactId="EBI-995714">
        <id>Q9Y605</id>
        <label>MRFAP1</label>
    </interactant>
    <organismsDiffer>false</organismsDiffer>
    <experiments>3</experiments>
</comment>
<comment type="interaction">
    <interactant intactId="EBI-11523345">
        <id>Q8IYF3-3</id>
    </interactant>
    <interactant intactId="EBI-10172876">
        <id>Q7Z6G3-2</id>
        <label>NECAB2</label>
    </interactant>
    <organismsDiffer>false</organismsDiffer>
    <experiments>3</experiments>
</comment>
<comment type="interaction">
    <interactant intactId="EBI-11523345">
        <id>Q8IYF3-3</id>
    </interactant>
    <interactant intactId="EBI-10178578">
        <id>I6L9F6</id>
        <label>NEFL</label>
    </interactant>
    <organismsDiffer>false</organismsDiffer>
    <experiments>3</experiments>
</comment>
<comment type="interaction">
    <interactant intactId="EBI-11523345">
        <id>Q8IYF3-3</id>
    </interactant>
    <interactant intactId="EBI-2557469">
        <id>Q6NYC8</id>
        <label>PPP1R18</label>
    </interactant>
    <organismsDiffer>false</organismsDiffer>
    <experiments>3</experiments>
</comment>
<comment type="interaction">
    <interactant intactId="EBI-11523345">
        <id>Q8IYF3-3</id>
    </interactant>
    <interactant intactId="EBI-724960">
        <id>O60256</id>
        <label>PRPSAP2</label>
    </interactant>
    <organismsDiffer>false</organismsDiffer>
    <experiments>3</experiments>
</comment>
<comment type="interaction">
    <interactant intactId="EBI-11523345">
        <id>Q8IYF3-3</id>
    </interactant>
    <interactant intactId="EBI-11603375">
        <id>A2A3K4</id>
        <label>PTPDC1</label>
    </interactant>
    <organismsDiffer>false</organismsDiffer>
    <experiments>3</experiments>
</comment>
<comment type="interaction">
    <interactant intactId="EBI-11523345">
        <id>Q8IYF3-3</id>
    </interactant>
    <interactant intactId="EBI-7954236">
        <id>Q9UPN6</id>
        <label>SCAF8</label>
    </interactant>
    <organismsDiffer>false</organismsDiffer>
    <experiments>3</experiments>
</comment>
<comment type="interaction">
    <interactant intactId="EBI-11523345">
        <id>Q8IYF3-3</id>
    </interactant>
    <interactant intactId="EBI-949294">
        <id>Q9UNH7</id>
        <label>SNX6</label>
    </interactant>
    <organismsDiffer>false</organismsDiffer>
    <experiments>3</experiments>
</comment>
<comment type="interaction">
    <interactant intactId="EBI-11523345">
        <id>Q8IYF3-3</id>
    </interactant>
    <interactant intactId="EBI-11954419">
        <id>P35711-4</id>
        <label>SOX5</label>
    </interactant>
    <organismsDiffer>false</organismsDiffer>
    <experiments>3</experiments>
</comment>
<comment type="interaction">
    <interactant intactId="EBI-11523345">
        <id>Q8IYF3-3</id>
    </interactant>
    <interactant intactId="EBI-714194">
        <id>Q93045</id>
        <label>STMN2</label>
    </interactant>
    <organismsDiffer>false</organismsDiffer>
    <experiments>3</experiments>
</comment>
<comment type="interaction">
    <interactant intactId="EBI-11523345">
        <id>Q8IYF3-3</id>
    </interactant>
    <interactant intactId="EBI-12041225">
        <id>Q9Y4E8-2</id>
        <label>USP15</label>
    </interactant>
    <organismsDiffer>false</organismsDiffer>
    <experiments>3</experiments>
</comment>
<comment type="interaction">
    <interactant intactId="EBI-11523345">
        <id>Q8IYF3-3</id>
    </interactant>
    <interactant intactId="EBI-11737646">
        <id>Q5TAP6</id>
        <label>UTP14C</label>
    </interactant>
    <organismsDiffer>false</organismsDiffer>
    <experiments>3</experiments>
</comment>
<comment type="interaction">
    <interactant intactId="EBI-11523345">
        <id>Q8IYF3-3</id>
    </interactant>
    <interactant intactId="EBI-744257">
        <id>Q96IQ9</id>
        <label>ZNF414</label>
    </interactant>
    <organismsDiffer>false</organismsDiffer>
    <experiments>3</experiments>
</comment>
<comment type="subcellular location">
    <subcellularLocation>
        <location evidence="1">Chromosome</location>
    </subcellularLocation>
    <text evidence="1">Forms arrays of discrete foci along synaptonemal complexes in spermatocytes and fetal oocytes.</text>
</comment>
<comment type="alternative products">
    <event type="alternative splicing"/>
    <isoform>
        <id>Q8IYF3-1</id>
        <name>1</name>
        <sequence type="displayed"/>
    </isoform>
    <isoform>
        <id>Q8IYF3-2</id>
        <name>2</name>
        <sequence type="described" ref="VSP_027260"/>
    </isoform>
    <isoform>
        <id>Q8IYF3-3</id>
        <name>3</name>
        <sequence type="described" ref="VSP_027261"/>
    </isoform>
</comment>
<comment type="tissue specificity">
    <text evidence="3">Testis-specific. Not expressed in adult ovaries.</text>
</comment>
<comment type="disease" evidence="4 5 7">
    <disease id="DI-04467">
        <name>Spermatogenic failure, X-linked, 2</name>
        <acronym>SPGFX2</acronym>
        <description>An infertility disorder caused by spermatogenesis defects. It is characterized by mixed testicular atrophy and azoospermia with meiotic arrest.</description>
        <dbReference type="MIM" id="309120"/>
    </disease>
    <text>The disease is caused by variants affecting the gene represented in this entry.</text>
</comment>
<comment type="similarity">
    <text evidence="11">Belongs to the SPO22 family.</text>
</comment>
<comment type="sequence caution" evidence="11">
    <conflict type="erroneous initiation">
        <sequence resource="EMBL-CDS" id="AAK31973"/>
    </conflict>
    <text>Truncated N-terminus.</text>
</comment>
<sequence>MISAHCNLRLLCSSDSSASASQVAGTTEVVENLVTNDNSPNIPEAIDRLFSDIANINRESMAEITDIQIEEMAVNLWNWALTIGGGWLVNEEQKIRLHYVACKLLSMCEASFASEQSIQRLIMMNMRIGKEWLDAGNFLIADECFQAAVASLEQLYVKLIQRSSPEADLTMEKITVESDHFRVLSYQAESAVAQGDFQRASMCVLQCKDMLMRLPQMTSSLHHLCYNFGVETQKNNKYEESSFWLSQSYDIGKMDKKSTGPEMLAKVLRLLATNYLDWDDTKYYDKALNAVNLANKEHLSSPGLFLKMKILLKGETSNEELLEAVMEILHLDMPLDFCLNIAKLLMDHERESVGFHFLTIIHERFKSSENIGKVLILHTDMLLQRKEELLAKEKIEEIFLAHQTGRQLTAESMNWLHNILWRQAASSFEVQNYTDALQWYYYSLRFYSTDEMDLDFTKLQRNMACCYLNLQQLDKAKEAVAEAERHDPRNVFTQFYIFKIAVIEGNSERALQAIITLENILTDEESEDNDLVAERGSPTMLLSLAAQFALENGQQIVAEKALEYLAQHSEDQEQVLTAVKCLLRFLLPKIAEMPESEDKKKEMDRLLTCLNRAFVKLSQPFGEEALSLESRANEAQWFRKTAWNLAVQCDKDPVMMREFFILSYKMSQFCPSDQVILIARKTCLLMAVAVDLEQGRKASTAFEQTMFLSRALEEIQTCNDIHNFLKQTGTFSNDSCEKLLLLYEFEVRAKLNDPLLESFLESVWELPHLETKTFETIAIIAMEKPAHYPLIALKALKKALLLYKKEEPIDISQYSKCMHNLVNLSVPDGASNVELCPLEEVWGYFEDALSHISRTKDYPEMEILWLMVKSWNTGVLMFSRSKYASAEKWCGLALRFLNHLTSFKESYETQMNMLYSQLVEALSNNKGPVFHEHGYWSKSD</sequence>
<gene>
    <name type="primary">TEX11</name>
    <name evidence="1" type="synonym">ZIP4</name>
</gene>